<sequence length="340" mass="36647">MNLNSPAVSMLGGDTPAHGGPNSVLGGQGPSSILTGHGPNSVMGPNSILGPGSVLNPQSIQPMQSQQMHSLQGSSMQMHSHLANSNLNLNINPASVGPDRNPGSVMHHNLDINPPSVAYQNLTVPMTPLAYSVYDRDALTHQAPASNIAATMVPATPASQLDIPMPALQNIVSTVNLGVQLDLKKIALHARNAEYNPKRFAAVIMRIREPRTTALIFSSGKMVCTGAKSEEASRLAARKYARIVQKLGFQAKFTEFMVQNMVGSCDVRFPIQLEGLCITHSQFSTYEPELFPGLIYRMVKPRVVLLIFVSGKVVITGAKTKRDIDEAFGQIYPILKGFKK</sequence>
<comment type="function">
    <text evidence="1 4">The TFIID basal transcription factor complex plays a major role in the initiation of RNA polymerase II (Pol II)-dependent transcription (By similarity). TFIID recognizes and binds promoters via its subunit tbp-1, a TATA-box-binding protein, and promotes assembly of the pre-initiation complex (PIC) (By similarity). The TFIID complex consists of tbp-1 and TBP-associated factors (TAFs) (By similarity). General transcription factor that functions at the core of the TFIID complex (PubMed:8415761).</text>
</comment>
<comment type="subunit">
    <text evidence="1 4">Component of the TFIID basal transcription factor complex, composed of TATA-box-binding protein tbp-1, and a number of TBP-associated factors (TAFs) (By similarity). Binds DNA as monomer (PubMed:8415761).</text>
</comment>
<comment type="subcellular location">
    <subcellularLocation>
        <location evidence="3">Nucleus</location>
    </subcellularLocation>
</comment>
<comment type="developmental stage">
    <text evidence="3">Expressed in the early embryo, in the germ line and in all somatic nuclei beginning at the pronuclear stage.</text>
</comment>
<comment type="similarity">
    <text evidence="6">Belongs to the TBP family.</text>
</comment>
<protein>
    <recommendedName>
        <fullName>TATA-box-binding protein</fullName>
    </recommendedName>
    <alternativeName>
        <fullName>TATA sequence-binding protein</fullName>
        <shortName>TBP</shortName>
    </alternativeName>
    <alternativeName>
        <fullName>TATA-binding factor</fullName>
        <shortName evidence="5">CeTBP</shortName>
    </alternativeName>
    <alternativeName>
        <fullName>TATA-box factor</fullName>
    </alternativeName>
    <alternativeName>
        <fullName>Transcription initiation factor TFIID TBP subunit</fullName>
    </alternativeName>
</protein>
<accession>P32085</accession>
<keyword id="KW-0238">DNA-binding</keyword>
<keyword id="KW-0539">Nucleus</keyword>
<keyword id="KW-1185">Reference proteome</keyword>
<keyword id="KW-0677">Repeat</keyword>
<keyword id="KW-0804">Transcription</keyword>
<name>TBP_CAEEL</name>
<evidence type="ECO:0000250" key="1">
    <source>
        <dbReference type="UniProtKB" id="P20226"/>
    </source>
</evidence>
<evidence type="ECO:0000256" key="2">
    <source>
        <dbReference type="SAM" id="MobiDB-lite"/>
    </source>
</evidence>
<evidence type="ECO:0000269" key="3">
    <source>
    </source>
</evidence>
<evidence type="ECO:0000269" key="4">
    <source>
    </source>
</evidence>
<evidence type="ECO:0000303" key="5">
    <source>
    </source>
</evidence>
<evidence type="ECO:0000305" key="6"/>
<dbReference type="EMBL" id="L07754">
    <property type="protein sequence ID" value="AAA03582.1"/>
    <property type="molecule type" value="mRNA"/>
</dbReference>
<dbReference type="EMBL" id="FO081094">
    <property type="protein sequence ID" value="CCD69071.1"/>
    <property type="molecule type" value="Genomic_DNA"/>
</dbReference>
<dbReference type="EMBL" id="AF303249">
    <property type="protein sequence ID" value="AAG50207.1"/>
    <property type="molecule type" value="mRNA"/>
</dbReference>
<dbReference type="PIR" id="A48671">
    <property type="entry name" value="A48671"/>
</dbReference>
<dbReference type="RefSeq" id="NP_001370645.1">
    <property type="nucleotide sequence ID" value="NM_001382915.2"/>
</dbReference>
<dbReference type="RefSeq" id="NP_498635.1">
    <property type="nucleotide sequence ID" value="NM_066234.5"/>
</dbReference>
<dbReference type="SMR" id="P32085"/>
<dbReference type="BioGRID" id="41263">
    <property type="interactions" value="23"/>
</dbReference>
<dbReference type="DIP" id="DIP-26447N"/>
<dbReference type="FunCoup" id="P32085">
    <property type="interactions" value="3239"/>
</dbReference>
<dbReference type="IntAct" id="P32085">
    <property type="interactions" value="8"/>
</dbReference>
<dbReference type="STRING" id="6239.T20B12.2.1"/>
<dbReference type="PaxDb" id="6239-T20B12.2.2"/>
<dbReference type="PeptideAtlas" id="P32085"/>
<dbReference type="EnsemblMetazoa" id="T20B12.2.1">
    <property type="protein sequence ID" value="T20B12.2.1"/>
    <property type="gene ID" value="WBGene00006542"/>
</dbReference>
<dbReference type="GeneID" id="176054"/>
<dbReference type="UCSC" id="T20B12.2.1">
    <property type="organism name" value="c. elegans"/>
</dbReference>
<dbReference type="AGR" id="WB:WBGene00006542"/>
<dbReference type="WormBase" id="T20B12.2">
    <property type="protein sequence ID" value="CE01408"/>
    <property type="gene ID" value="WBGene00006542"/>
    <property type="gene designation" value="tbp-1"/>
</dbReference>
<dbReference type="eggNOG" id="KOG3302">
    <property type="taxonomic scope" value="Eukaryota"/>
</dbReference>
<dbReference type="GeneTree" id="ENSGT00940000167740"/>
<dbReference type="HOGENOM" id="CLU_060161_1_3_1"/>
<dbReference type="InParanoid" id="P32085"/>
<dbReference type="OMA" id="HFQPASN"/>
<dbReference type="OrthoDB" id="2127950at2759"/>
<dbReference type="PhylomeDB" id="P32085"/>
<dbReference type="Reactome" id="R-CEL-5250924">
    <property type="pathway name" value="B-WICH complex positively regulates rRNA expression"/>
</dbReference>
<dbReference type="Reactome" id="R-CEL-674695">
    <property type="pathway name" value="RNA Polymerase II Pre-transcription Events"/>
</dbReference>
<dbReference type="Reactome" id="R-CEL-6807505">
    <property type="pathway name" value="RNA polymerase II transcribes snRNA genes"/>
</dbReference>
<dbReference type="Reactome" id="R-CEL-73772">
    <property type="pathway name" value="RNA Polymerase I Promoter Escape"/>
</dbReference>
<dbReference type="Reactome" id="R-CEL-73776">
    <property type="pathway name" value="RNA Polymerase II Promoter Escape"/>
</dbReference>
<dbReference type="Reactome" id="R-CEL-73779">
    <property type="pathway name" value="RNA Polymerase II Transcription Pre-Initiation And Promoter Opening"/>
</dbReference>
<dbReference type="Reactome" id="R-CEL-75953">
    <property type="pathway name" value="RNA Polymerase II Transcription Initiation"/>
</dbReference>
<dbReference type="Reactome" id="R-CEL-76042">
    <property type="pathway name" value="RNA Polymerase II Transcription Initiation And Promoter Clearance"/>
</dbReference>
<dbReference type="SignaLink" id="P32085"/>
<dbReference type="PRO" id="PR:P32085"/>
<dbReference type="Proteomes" id="UP000001940">
    <property type="component" value="Chromosome III"/>
</dbReference>
<dbReference type="Bgee" id="WBGene00006542">
    <property type="expression patterns" value="Expressed in embryo and 4 other cell types or tissues"/>
</dbReference>
<dbReference type="GO" id="GO:0005634">
    <property type="term" value="C:nucleus"/>
    <property type="evidence" value="ECO:0000314"/>
    <property type="project" value="UniProtKB"/>
</dbReference>
<dbReference type="GO" id="GO:0005669">
    <property type="term" value="C:transcription factor TFIID complex"/>
    <property type="evidence" value="ECO:0000250"/>
    <property type="project" value="UniProtKB"/>
</dbReference>
<dbReference type="GO" id="GO:0003700">
    <property type="term" value="F:DNA-binding transcription factor activity"/>
    <property type="evidence" value="ECO:0000314"/>
    <property type="project" value="WormBase"/>
</dbReference>
<dbReference type="GO" id="GO:0003680">
    <property type="term" value="F:minor groove of adenine-thymine-rich DNA binding"/>
    <property type="evidence" value="ECO:0000314"/>
    <property type="project" value="WormBase"/>
</dbReference>
<dbReference type="GO" id="GO:0016251">
    <property type="term" value="F:RNA polymerase II general transcription initiation factor activity"/>
    <property type="evidence" value="ECO:0000318"/>
    <property type="project" value="GO_Central"/>
</dbReference>
<dbReference type="GO" id="GO:0000995">
    <property type="term" value="F:RNA polymerase III general transcription initiation factor activity"/>
    <property type="evidence" value="ECO:0000250"/>
    <property type="project" value="UniProtKB"/>
</dbReference>
<dbReference type="GO" id="GO:0001092">
    <property type="term" value="F:TFIIA-class transcription factor complex binding"/>
    <property type="evidence" value="ECO:0000353"/>
    <property type="project" value="WormBase"/>
</dbReference>
<dbReference type="GO" id="GO:0001093">
    <property type="term" value="F:TFIIB-class transcription factor binding"/>
    <property type="evidence" value="ECO:0000353"/>
    <property type="project" value="WormBase"/>
</dbReference>
<dbReference type="GO" id="GO:0006352">
    <property type="term" value="P:DNA-templated transcription initiation"/>
    <property type="evidence" value="ECO:0000318"/>
    <property type="project" value="GO_Central"/>
</dbReference>
<dbReference type="GO" id="GO:0045893">
    <property type="term" value="P:positive regulation of DNA-templated transcription"/>
    <property type="evidence" value="ECO:0000314"/>
    <property type="project" value="WormBase"/>
</dbReference>
<dbReference type="GO" id="GO:0006366">
    <property type="term" value="P:transcription by RNA polymerase II"/>
    <property type="evidence" value="ECO:0000250"/>
    <property type="project" value="UniProtKB"/>
</dbReference>
<dbReference type="GO" id="GO:0006383">
    <property type="term" value="P:transcription by RNA polymerase III"/>
    <property type="evidence" value="ECO:0000250"/>
    <property type="project" value="UniProtKB"/>
</dbReference>
<dbReference type="CDD" id="cd04516">
    <property type="entry name" value="TBP_eukaryotes"/>
    <property type="match status" value="1"/>
</dbReference>
<dbReference type="FunFam" id="3.30.310.10:FF:000001">
    <property type="entry name" value="TATA-box-binding protein 2"/>
    <property type="match status" value="1"/>
</dbReference>
<dbReference type="FunFam" id="3.30.310.10:FF:000002">
    <property type="entry name" value="TATA-box-binding protein 2"/>
    <property type="match status" value="1"/>
</dbReference>
<dbReference type="Gene3D" id="3.30.310.10">
    <property type="entry name" value="TATA-Binding Protein"/>
    <property type="match status" value="2"/>
</dbReference>
<dbReference type="HAMAP" id="MF_00408">
    <property type="entry name" value="TATA_bind_prot_arch"/>
    <property type="match status" value="1"/>
</dbReference>
<dbReference type="InterPro" id="IPR000814">
    <property type="entry name" value="TBP"/>
</dbReference>
<dbReference type="InterPro" id="IPR030491">
    <property type="entry name" value="TBP_CS"/>
</dbReference>
<dbReference type="InterPro" id="IPR012295">
    <property type="entry name" value="TBP_dom_sf"/>
</dbReference>
<dbReference type="InterPro" id="IPR033710">
    <property type="entry name" value="TBP_eukaryotic"/>
</dbReference>
<dbReference type="PANTHER" id="PTHR10126">
    <property type="entry name" value="TATA-BOX BINDING PROTEIN"/>
    <property type="match status" value="1"/>
</dbReference>
<dbReference type="Pfam" id="PF00352">
    <property type="entry name" value="TBP"/>
    <property type="match status" value="2"/>
</dbReference>
<dbReference type="PRINTS" id="PR00686">
    <property type="entry name" value="TIFACTORIID"/>
</dbReference>
<dbReference type="SUPFAM" id="SSF55945">
    <property type="entry name" value="TATA-box binding protein-like"/>
    <property type="match status" value="2"/>
</dbReference>
<dbReference type="PROSITE" id="PS00351">
    <property type="entry name" value="TFIID"/>
    <property type="match status" value="2"/>
</dbReference>
<feature type="chain" id="PRO_0000153970" description="TATA-box-binding protein">
    <location>
        <begin position="1"/>
        <end position="340"/>
    </location>
</feature>
<feature type="repeat" description="1">
    <location>
        <begin position="168"/>
        <end position="244"/>
    </location>
</feature>
<feature type="repeat" description="2">
    <location>
        <begin position="258"/>
        <end position="335"/>
    </location>
</feature>
<feature type="region of interest" description="Disordered" evidence="2">
    <location>
        <begin position="1"/>
        <end position="78"/>
    </location>
</feature>
<feature type="compositionally biased region" description="Low complexity" evidence="2">
    <location>
        <begin position="57"/>
        <end position="68"/>
    </location>
</feature>
<feature type="compositionally biased region" description="Polar residues" evidence="2">
    <location>
        <begin position="69"/>
        <end position="78"/>
    </location>
</feature>
<organism>
    <name type="scientific">Caenorhabditis elegans</name>
    <dbReference type="NCBI Taxonomy" id="6239"/>
    <lineage>
        <taxon>Eukaryota</taxon>
        <taxon>Metazoa</taxon>
        <taxon>Ecdysozoa</taxon>
        <taxon>Nematoda</taxon>
        <taxon>Chromadorea</taxon>
        <taxon>Rhabditida</taxon>
        <taxon>Rhabditina</taxon>
        <taxon>Rhabditomorpha</taxon>
        <taxon>Rhabditoidea</taxon>
        <taxon>Rhabditidae</taxon>
        <taxon>Peloderinae</taxon>
        <taxon>Caenorhabditis</taxon>
    </lineage>
</organism>
<gene>
    <name type="primary">tbp-1</name>
    <name type="synonym">tbp</name>
    <name type="ORF">T20B12.2</name>
</gene>
<proteinExistence type="evidence at protein level"/>
<reference key="1">
    <citation type="journal article" date="1993" name="Proc. Natl. Acad. Sci. U.S.A.">
        <title>Cloning and properties of the Caenorhabditis elegans TATA-box-binding protein.</title>
        <authorList>
            <person name="Lichtsteiner S."/>
            <person name="Tjian R."/>
        </authorList>
    </citation>
    <scope>NUCLEOTIDE SEQUENCE [MRNA]</scope>
    <scope>FUNCTION</scope>
    <scope>SUBUNIT</scope>
</reference>
<reference key="2">
    <citation type="journal article" date="1998" name="Science">
        <title>Genome sequence of the nematode C. elegans: a platform for investigating biology.</title>
        <authorList>
            <consortium name="The C. elegans sequencing consortium"/>
        </authorList>
    </citation>
    <scope>NUCLEOTIDE SEQUENCE [LARGE SCALE GENOMIC DNA]</scope>
    <source>
        <strain>Bristol N2</strain>
    </source>
</reference>
<reference key="3">
    <citation type="submission" date="2000-08" db="EMBL/GenBank/DDBJ databases">
        <title>The Caenorhabditis elegans transcriptome project, a complementary view of the genome.</title>
        <authorList>
            <person name="Kohara Y."/>
            <person name="Shin-i T."/>
            <person name="Suzuki Y."/>
            <person name="Sugano S."/>
            <person name="Potdevin M."/>
            <person name="Thierry-Mieg Y."/>
            <person name="Thierry-Mieg D."/>
            <person name="Thierry-Mieg J."/>
        </authorList>
    </citation>
    <scope>NUCLEOTIDE SEQUENCE [LARGE SCALE MRNA]</scope>
    <source>
        <strain>Bristol N2</strain>
    </source>
</reference>
<reference key="4">
    <citation type="journal article" date="2000" name="Mol. Cell">
        <title>The TBP-like factor CeTLF is required to activate RNA polymerase II transcription during C. elegans embryogenesis.</title>
        <authorList>
            <person name="Kaltenbach L."/>
            <person name="Horner M.A."/>
            <person name="Rothman J.H."/>
            <person name="Mango S.E."/>
        </authorList>
    </citation>
    <scope>DEVELOPMENTAL STAGE</scope>
    <scope>SUBCELLULAR LOCATION</scope>
</reference>